<evidence type="ECO:0000250" key="1">
    <source>
        <dbReference type="UniProtKB" id="P15289"/>
    </source>
</evidence>
<evidence type="ECO:0000250" key="2">
    <source>
        <dbReference type="UniProtKB" id="P51690"/>
    </source>
</evidence>
<evidence type="ECO:0000255" key="3"/>
<evidence type="ECO:0000305" key="4"/>
<accession>Q60HH5</accession>
<feature type="signal peptide" evidence="3">
    <location>
        <begin position="1"/>
        <end position="31"/>
    </location>
</feature>
<feature type="chain" id="PRO_0000033426" description="Arylsulfatase L">
    <location>
        <begin position="32"/>
        <end position="588"/>
    </location>
</feature>
<feature type="active site" description="Nucleophile" evidence="1">
    <location>
        <position position="86"/>
    </location>
</feature>
<feature type="active site" evidence="1">
    <location>
        <position position="147"/>
    </location>
</feature>
<feature type="binding site" evidence="1">
    <location>
        <position position="46"/>
    </location>
    <ligand>
        <name>Ca(2+)</name>
        <dbReference type="ChEBI" id="CHEBI:29108"/>
    </ligand>
</feature>
<feature type="binding site" evidence="1">
    <location>
        <position position="47"/>
    </location>
    <ligand>
        <name>Ca(2+)</name>
        <dbReference type="ChEBI" id="CHEBI:29108"/>
    </ligand>
</feature>
<feature type="binding site" description="via 3-oxoalanine" evidence="1">
    <location>
        <position position="86"/>
    </location>
    <ligand>
        <name>Ca(2+)</name>
        <dbReference type="ChEBI" id="CHEBI:29108"/>
    </ligand>
</feature>
<feature type="binding site" evidence="1">
    <location>
        <position position="145"/>
    </location>
    <ligand>
        <name>substrate</name>
    </ligand>
</feature>
<feature type="binding site" evidence="1">
    <location>
        <position position="301"/>
    </location>
    <ligand>
        <name>substrate</name>
    </ligand>
</feature>
<feature type="binding site" evidence="1">
    <location>
        <position position="353"/>
    </location>
    <ligand>
        <name>Ca(2+)</name>
        <dbReference type="ChEBI" id="CHEBI:29108"/>
    </ligand>
</feature>
<feature type="binding site" evidence="1">
    <location>
        <position position="354"/>
    </location>
    <ligand>
        <name>Ca(2+)</name>
        <dbReference type="ChEBI" id="CHEBI:29108"/>
    </ligand>
</feature>
<feature type="binding site" evidence="1">
    <location>
        <position position="378"/>
    </location>
    <ligand>
        <name>substrate</name>
    </ligand>
</feature>
<feature type="modified residue" description="3-oxoalanine (Cys)" evidence="1">
    <location>
        <position position="86"/>
    </location>
</feature>
<feature type="glycosylation site" description="N-linked (GlcNAc...) asparagine" evidence="3">
    <location>
        <position position="32"/>
    </location>
</feature>
<feature type="glycosylation site" description="N-linked (GlcNAc...) asparagine" evidence="3">
    <location>
        <position position="58"/>
    </location>
</feature>
<feature type="glycosylation site" description="N-linked (GlcNAc...) asparagine" evidence="3">
    <location>
        <position position="125"/>
    </location>
</feature>
<feature type="glycosylation site" description="N-linked (GlcNAc...) asparagine" evidence="3">
    <location>
        <position position="258"/>
    </location>
</feature>
<feature type="glycosylation site" description="N-linked (GlcNAc...) asparagine" evidence="3">
    <location>
        <position position="344"/>
    </location>
</feature>
<reference key="1">
    <citation type="submission" date="2003-10" db="EMBL/GenBank/DDBJ databases">
        <title>Isolation and characterization of cDNA for macaque neurological disease genes.</title>
        <authorList>
            <person name="Kusuda J."/>
            <person name="Osada N."/>
            <person name="Tanuma R."/>
            <person name="Hirata M."/>
            <person name="Sugano S."/>
            <person name="Hashimoto K."/>
        </authorList>
    </citation>
    <scope>NUCLEOTIDE SEQUENCE [LARGE SCALE MRNA]</scope>
    <source>
        <tissue>Temporal cortex</tissue>
    </source>
</reference>
<dbReference type="EC" id="3.1.6.1" evidence="2"/>
<dbReference type="EMBL" id="AB125152">
    <property type="protein sequence ID" value="BAD51940.1"/>
    <property type="molecule type" value="mRNA"/>
</dbReference>
<dbReference type="RefSeq" id="NP_001270146.1">
    <property type="nucleotide sequence ID" value="NM_001283217.1"/>
</dbReference>
<dbReference type="SMR" id="Q60HH5"/>
<dbReference type="STRING" id="9541.ENSMFAP00000039006"/>
<dbReference type="GlyCosmos" id="Q60HH5">
    <property type="glycosylation" value="5 sites, No reported glycans"/>
</dbReference>
<dbReference type="eggNOG" id="KOG3867">
    <property type="taxonomic scope" value="Eukaryota"/>
</dbReference>
<dbReference type="Proteomes" id="UP000233100">
    <property type="component" value="Unplaced"/>
</dbReference>
<dbReference type="GO" id="GO:0005794">
    <property type="term" value="C:Golgi apparatus"/>
    <property type="evidence" value="ECO:0000250"/>
    <property type="project" value="UniProtKB"/>
</dbReference>
<dbReference type="GO" id="GO:0005795">
    <property type="term" value="C:Golgi stack"/>
    <property type="evidence" value="ECO:0007669"/>
    <property type="project" value="UniProtKB-SubCell"/>
</dbReference>
<dbReference type="GO" id="GO:0004065">
    <property type="term" value="F:arylsulfatase activity"/>
    <property type="evidence" value="ECO:0000250"/>
    <property type="project" value="UniProtKB"/>
</dbReference>
<dbReference type="GO" id="GO:0046872">
    <property type="term" value="F:metal ion binding"/>
    <property type="evidence" value="ECO:0007669"/>
    <property type="project" value="UniProtKB-KW"/>
</dbReference>
<dbReference type="FunFam" id="1.10.287.550:FF:000001">
    <property type="entry name" value="Arylsulfatase E"/>
    <property type="match status" value="1"/>
</dbReference>
<dbReference type="FunFam" id="3.30.1120.10:FF:000001">
    <property type="entry name" value="Arylsulfatase E"/>
    <property type="match status" value="1"/>
</dbReference>
<dbReference type="FunFam" id="3.40.720.10:FF:000233">
    <property type="entry name" value="Predicted protein"/>
    <property type="match status" value="1"/>
</dbReference>
<dbReference type="Gene3D" id="3.30.1120.10">
    <property type="match status" value="1"/>
</dbReference>
<dbReference type="Gene3D" id="3.40.720.10">
    <property type="entry name" value="Alkaline Phosphatase, subunit A"/>
    <property type="match status" value="1"/>
</dbReference>
<dbReference type="Gene3D" id="1.10.287.550">
    <property type="entry name" value="Helix hairpin bin"/>
    <property type="match status" value="1"/>
</dbReference>
<dbReference type="InterPro" id="IPR017850">
    <property type="entry name" value="Alkaline_phosphatase_core_sf"/>
</dbReference>
<dbReference type="InterPro" id="IPR050738">
    <property type="entry name" value="Sulfatase"/>
</dbReference>
<dbReference type="InterPro" id="IPR024607">
    <property type="entry name" value="Sulfatase_CS"/>
</dbReference>
<dbReference type="InterPro" id="IPR000917">
    <property type="entry name" value="Sulfatase_N"/>
</dbReference>
<dbReference type="PANTHER" id="PTHR42693">
    <property type="entry name" value="ARYLSULFATASE FAMILY MEMBER"/>
    <property type="match status" value="1"/>
</dbReference>
<dbReference type="PANTHER" id="PTHR42693:SF48">
    <property type="entry name" value="ARYLSULFATASE L"/>
    <property type="match status" value="1"/>
</dbReference>
<dbReference type="Pfam" id="PF00884">
    <property type="entry name" value="Sulfatase"/>
    <property type="match status" value="1"/>
</dbReference>
<dbReference type="Pfam" id="PF14707">
    <property type="entry name" value="Sulfatase_C"/>
    <property type="match status" value="1"/>
</dbReference>
<dbReference type="SUPFAM" id="SSF53649">
    <property type="entry name" value="Alkaline phosphatase-like"/>
    <property type="match status" value="1"/>
</dbReference>
<dbReference type="PROSITE" id="PS00523">
    <property type="entry name" value="SULFATASE_1"/>
    <property type="match status" value="1"/>
</dbReference>
<dbReference type="PROSITE" id="PS00149">
    <property type="entry name" value="SULFATASE_2"/>
    <property type="match status" value="1"/>
</dbReference>
<gene>
    <name type="primary">ARSL</name>
    <name type="synonym">ARSE</name>
    <name type="ORF">QtrA-14484</name>
</gene>
<name>ARSL_MACFA</name>
<keyword id="KW-0106">Calcium</keyword>
<keyword id="KW-0325">Glycoprotein</keyword>
<keyword id="KW-0333">Golgi apparatus</keyword>
<keyword id="KW-0378">Hydrolase</keyword>
<keyword id="KW-0479">Metal-binding</keyword>
<keyword id="KW-1185">Reference proteome</keyword>
<keyword id="KW-0732">Signal</keyword>
<proteinExistence type="evidence at transcript level"/>
<comment type="function">
    <text evidence="2">Exhibits arylsulfatase activity towards the artificial substrate 4-methylumbelliferyl sulfate (By similarity). May be essential for the correct composition of cartilage and bone matrix during development (By similarity). Has no activity toward steroid sulfates (By similarity).</text>
</comment>
<comment type="catalytic activity">
    <reaction evidence="2">
        <text>an aryl sulfate + H2O = a phenol + sulfate + H(+)</text>
        <dbReference type="Rhea" id="RHEA:17261"/>
        <dbReference type="ChEBI" id="CHEBI:15377"/>
        <dbReference type="ChEBI" id="CHEBI:15378"/>
        <dbReference type="ChEBI" id="CHEBI:16189"/>
        <dbReference type="ChEBI" id="CHEBI:33853"/>
        <dbReference type="ChEBI" id="CHEBI:140317"/>
        <dbReference type="EC" id="3.1.6.1"/>
    </reaction>
</comment>
<comment type="cofactor">
    <cofactor evidence="1">
        <name>Ca(2+)</name>
        <dbReference type="ChEBI" id="CHEBI:29108"/>
    </cofactor>
    <text evidence="1">Binds 1 Ca(2+) ion per subunit.</text>
</comment>
<comment type="subcellular location">
    <subcellularLocation>
        <location evidence="2">Golgi apparatus</location>
        <location evidence="2">Golgi stack</location>
    </subcellularLocation>
</comment>
<comment type="PTM">
    <text evidence="1">The conversion to 3-oxoalanine (also known as C-formylglycine, FGly), of a serine or cysteine residue in prokaryotes and of a cysteine residue in eukaryotes, is critical for catalytic activity.</text>
</comment>
<comment type="similarity">
    <text evidence="4">Belongs to the sulfatase family.</text>
</comment>
<sequence length="588" mass="65480">MLHLHHSWLCFRSWLAGMLSVLLGLVPSASSNISTSRPNILLLMADDLGIGDIGCYGNNTMRTPNIDRLAEDGVKLTQHISAASLCTPSRAAFLTGRYPVRSGMVSSIGYRVLQWTGASGGLPTNETTFAKILKEKGYATGLIGKWHLGLNCESASDHCHHPLHHGFDHFYGMPFSLMGDCAHWELSEKRVNLEQKLNFLFQVLALVALTLVAGKLTHLIPVSWTPVIWSALWAVLLLTGSYFVGALIVHAGCLLMRNHTITEQPMRFQKTTPLILQEVASFLKRNKHGPFLLFVSFLHVHIPLITMENFLGKSLHGLYGDNVEEMDWMVGQILDTLDMEGLTNSTLIYFTSDHGGSLENQLGRTQYGGWNGIYKGGKGMGGWEGGIRVPGIFRWPGVLPAGQVIGEPTSLMDVFPTVVQLAGGEVPQDRVIDGQDLLPLLLGTAQHSDHEFLMHYCEGFLHAARWHQRDRTTWKVHFVTPVFQPEGAGACYGRKVCPCFGEKVLHHDPPLLFDLSRDPSETHVLTPASEPVFYQVMERVQRAVREHQRTLSPVPLQLDRLGNIWRPWLQPSCGPFPLCWCLREDGPQ</sequence>
<organism>
    <name type="scientific">Macaca fascicularis</name>
    <name type="common">Crab-eating macaque</name>
    <name type="synonym">Cynomolgus monkey</name>
    <dbReference type="NCBI Taxonomy" id="9541"/>
    <lineage>
        <taxon>Eukaryota</taxon>
        <taxon>Metazoa</taxon>
        <taxon>Chordata</taxon>
        <taxon>Craniata</taxon>
        <taxon>Vertebrata</taxon>
        <taxon>Euteleostomi</taxon>
        <taxon>Mammalia</taxon>
        <taxon>Eutheria</taxon>
        <taxon>Euarchontoglires</taxon>
        <taxon>Primates</taxon>
        <taxon>Haplorrhini</taxon>
        <taxon>Catarrhini</taxon>
        <taxon>Cercopithecidae</taxon>
        <taxon>Cercopithecinae</taxon>
        <taxon>Macaca</taxon>
    </lineage>
</organism>
<protein>
    <recommendedName>
        <fullName>Arylsulfatase L</fullName>
        <ecNumber evidence="2">3.1.6.1</ecNumber>
    </recommendedName>
    <alternativeName>
        <fullName>Arylsulfatase E</fullName>
        <shortName>ASE</shortName>
    </alternativeName>
</protein>